<accession>Q5HEN0</accession>
<dbReference type="EC" id="1.16.3.2"/>
<dbReference type="EMBL" id="CP000046">
    <property type="protein sequence ID" value="AAW38393.1"/>
    <property type="molecule type" value="Genomic_DNA"/>
</dbReference>
<dbReference type="RefSeq" id="WP_000949467.1">
    <property type="nucleotide sequence ID" value="NZ_JBGOFO010000006.1"/>
</dbReference>
<dbReference type="SMR" id="Q5HEN0"/>
<dbReference type="KEGG" id="sac:SACOL1952"/>
<dbReference type="HOGENOM" id="CLU_065681_1_2_9"/>
<dbReference type="Proteomes" id="UP000000530">
    <property type="component" value="Chromosome"/>
</dbReference>
<dbReference type="GO" id="GO:0005829">
    <property type="term" value="C:cytosol"/>
    <property type="evidence" value="ECO:0007669"/>
    <property type="project" value="TreeGrafter"/>
</dbReference>
<dbReference type="GO" id="GO:0008199">
    <property type="term" value="F:ferric iron binding"/>
    <property type="evidence" value="ECO:0007669"/>
    <property type="project" value="InterPro"/>
</dbReference>
<dbReference type="GO" id="GO:0008198">
    <property type="term" value="F:ferrous iron binding"/>
    <property type="evidence" value="ECO:0007669"/>
    <property type="project" value="TreeGrafter"/>
</dbReference>
<dbReference type="GO" id="GO:0004322">
    <property type="term" value="F:ferroxidase activity"/>
    <property type="evidence" value="ECO:0007669"/>
    <property type="project" value="TreeGrafter"/>
</dbReference>
<dbReference type="GO" id="GO:0006879">
    <property type="term" value="P:intracellular iron ion homeostasis"/>
    <property type="evidence" value="ECO:0007669"/>
    <property type="project" value="UniProtKB-KW"/>
</dbReference>
<dbReference type="GO" id="GO:0006826">
    <property type="term" value="P:iron ion transport"/>
    <property type="evidence" value="ECO:0007669"/>
    <property type="project" value="InterPro"/>
</dbReference>
<dbReference type="CDD" id="cd01055">
    <property type="entry name" value="Nonheme_Ferritin"/>
    <property type="match status" value="1"/>
</dbReference>
<dbReference type="FunFam" id="1.20.1260.10:FF:000001">
    <property type="entry name" value="Non-heme ferritin"/>
    <property type="match status" value="1"/>
</dbReference>
<dbReference type="Gene3D" id="1.20.1260.10">
    <property type="match status" value="1"/>
</dbReference>
<dbReference type="InterPro" id="IPR001519">
    <property type="entry name" value="Ferritin"/>
</dbReference>
<dbReference type="InterPro" id="IPR012347">
    <property type="entry name" value="Ferritin-like"/>
</dbReference>
<dbReference type="InterPro" id="IPR009040">
    <property type="entry name" value="Ferritin-like_diiron"/>
</dbReference>
<dbReference type="InterPro" id="IPR009078">
    <property type="entry name" value="Ferritin-like_SF"/>
</dbReference>
<dbReference type="InterPro" id="IPR008331">
    <property type="entry name" value="Ferritin_DPS_dom"/>
</dbReference>
<dbReference type="InterPro" id="IPR041719">
    <property type="entry name" value="Ferritin_prok"/>
</dbReference>
<dbReference type="PANTHER" id="PTHR11431:SF127">
    <property type="entry name" value="BACTERIAL NON-HEME FERRITIN"/>
    <property type="match status" value="1"/>
</dbReference>
<dbReference type="PANTHER" id="PTHR11431">
    <property type="entry name" value="FERRITIN"/>
    <property type="match status" value="1"/>
</dbReference>
<dbReference type="Pfam" id="PF00210">
    <property type="entry name" value="Ferritin"/>
    <property type="match status" value="1"/>
</dbReference>
<dbReference type="SUPFAM" id="SSF47240">
    <property type="entry name" value="Ferritin-like"/>
    <property type="match status" value="1"/>
</dbReference>
<dbReference type="PROSITE" id="PS50905">
    <property type="entry name" value="FERRITIN_LIKE"/>
    <property type="match status" value="1"/>
</dbReference>
<feature type="initiator methionine" description="Removed" evidence="1">
    <location>
        <position position="1"/>
    </location>
</feature>
<feature type="chain" id="PRO_0000298964" description="Bacterial non-heme ferritin">
    <location>
        <begin position="2"/>
        <end position="166"/>
    </location>
</feature>
<feature type="domain" description="Ferritin-like diiron" evidence="2">
    <location>
        <begin position="2"/>
        <end position="145"/>
    </location>
</feature>
<feature type="binding site" evidence="2">
    <location>
        <position position="17"/>
    </location>
    <ligand>
        <name>Fe cation</name>
        <dbReference type="ChEBI" id="CHEBI:24875"/>
        <label>1</label>
    </ligand>
</feature>
<feature type="binding site" evidence="2">
    <location>
        <position position="50"/>
    </location>
    <ligand>
        <name>Fe cation</name>
        <dbReference type="ChEBI" id="CHEBI:24875"/>
        <label>1</label>
    </ligand>
</feature>
<feature type="binding site" evidence="2">
    <location>
        <position position="50"/>
    </location>
    <ligand>
        <name>Fe cation</name>
        <dbReference type="ChEBI" id="CHEBI:24875"/>
        <label>2</label>
    </ligand>
</feature>
<feature type="binding site" evidence="2">
    <location>
        <position position="53"/>
    </location>
    <ligand>
        <name>Fe cation</name>
        <dbReference type="ChEBI" id="CHEBI:24875"/>
        <label>1</label>
    </ligand>
</feature>
<feature type="binding site" evidence="2">
    <location>
        <position position="94"/>
    </location>
    <ligand>
        <name>Fe cation</name>
        <dbReference type="ChEBI" id="CHEBI:24875"/>
        <label>2</label>
    </ligand>
</feature>
<feature type="binding site" evidence="2">
    <location>
        <position position="127"/>
    </location>
    <ligand>
        <name>Fe cation</name>
        <dbReference type="ChEBI" id="CHEBI:24875"/>
        <label>2</label>
    </ligand>
</feature>
<reference key="1">
    <citation type="journal article" date="2005" name="J. Bacteriol.">
        <title>Insights on evolution of virulence and resistance from the complete genome analysis of an early methicillin-resistant Staphylococcus aureus strain and a biofilm-producing methicillin-resistant Staphylococcus epidermidis strain.</title>
        <authorList>
            <person name="Gill S.R."/>
            <person name="Fouts D.E."/>
            <person name="Archer G.L."/>
            <person name="Mongodin E.F."/>
            <person name="DeBoy R.T."/>
            <person name="Ravel J."/>
            <person name="Paulsen I.T."/>
            <person name="Kolonay J.F."/>
            <person name="Brinkac L.M."/>
            <person name="Beanan M.J."/>
            <person name="Dodson R.J."/>
            <person name="Daugherty S.C."/>
            <person name="Madupu R."/>
            <person name="Angiuoli S.V."/>
            <person name="Durkin A.S."/>
            <person name="Haft D.H."/>
            <person name="Vamathevan J.J."/>
            <person name="Khouri H."/>
            <person name="Utterback T.R."/>
            <person name="Lee C."/>
            <person name="Dimitrov G."/>
            <person name="Jiang L."/>
            <person name="Qin H."/>
            <person name="Weidman J."/>
            <person name="Tran K."/>
            <person name="Kang K.H."/>
            <person name="Hance I.R."/>
            <person name="Nelson K.E."/>
            <person name="Fraser C.M."/>
        </authorList>
    </citation>
    <scope>NUCLEOTIDE SEQUENCE [LARGE SCALE GENOMIC DNA]</scope>
    <source>
        <strain>COL</strain>
    </source>
</reference>
<keyword id="KW-0963">Cytoplasm</keyword>
<keyword id="KW-0408">Iron</keyword>
<keyword id="KW-0409">Iron storage</keyword>
<keyword id="KW-0479">Metal-binding</keyword>
<keyword id="KW-0560">Oxidoreductase</keyword>
<proteinExistence type="inferred from homology"/>
<evidence type="ECO:0000250" key="1"/>
<evidence type="ECO:0000255" key="2">
    <source>
        <dbReference type="PROSITE-ProRule" id="PRU00085"/>
    </source>
</evidence>
<evidence type="ECO:0000305" key="3"/>
<comment type="function">
    <text evidence="1">Iron-storage protein.</text>
</comment>
<comment type="catalytic activity">
    <reaction>
        <text>4 Fe(2+) + O2 + 6 H2O = 4 iron(III) oxide-hydroxide + 12 H(+)</text>
        <dbReference type="Rhea" id="RHEA:11972"/>
        <dbReference type="ChEBI" id="CHEBI:15377"/>
        <dbReference type="ChEBI" id="CHEBI:15378"/>
        <dbReference type="ChEBI" id="CHEBI:15379"/>
        <dbReference type="ChEBI" id="CHEBI:29033"/>
        <dbReference type="ChEBI" id="CHEBI:78619"/>
        <dbReference type="EC" id="1.16.3.2"/>
    </reaction>
</comment>
<comment type="subcellular location">
    <subcellularLocation>
        <location evidence="1">Cytoplasm</location>
    </subcellularLocation>
</comment>
<comment type="similarity">
    <text evidence="3">Belongs to the ferritin family. Prokaryotic subfamily.</text>
</comment>
<organism>
    <name type="scientific">Staphylococcus aureus (strain COL)</name>
    <dbReference type="NCBI Taxonomy" id="93062"/>
    <lineage>
        <taxon>Bacteria</taxon>
        <taxon>Bacillati</taxon>
        <taxon>Bacillota</taxon>
        <taxon>Bacilli</taxon>
        <taxon>Bacillales</taxon>
        <taxon>Staphylococcaceae</taxon>
        <taxon>Staphylococcus</taxon>
    </lineage>
</organism>
<name>FTN_STAAC</name>
<sequence length="166" mass="19589">MLSKNLLEALNDQMNHEYFAAHAYMAMAAYCDKESYEGFANFFIQQAKEERFHGQKIYNYINDRGAHAEFRAVSAPKIDFSSILETFKDSLSQEQEVTRRFYNLSEIARQDKDYATISFLNWFLDEQVEEESMFETHINYLTRIGDDSNALYLYEKELGARTFDEE</sequence>
<protein>
    <recommendedName>
        <fullName>Bacterial non-heme ferritin</fullName>
        <ecNumber>1.16.3.2</ecNumber>
    </recommendedName>
</protein>
<gene>
    <name type="primary">ftnA</name>
    <name type="ordered locus">SACOL1952</name>
</gene>